<organism evidence="9 10">
    <name type="scientific">Cryptococcus neoformans var. grubii serotype A (strain H99 / ATCC 208821 / CBS 10515 / FGSC 9487)</name>
    <name type="common">Filobasidiella neoformans var. grubii</name>
    <dbReference type="NCBI Taxonomy" id="235443"/>
    <lineage>
        <taxon>Eukaryota</taxon>
        <taxon>Fungi</taxon>
        <taxon>Dikarya</taxon>
        <taxon>Basidiomycota</taxon>
        <taxon>Agaricomycotina</taxon>
        <taxon>Tremellomycetes</taxon>
        <taxon>Tremellales</taxon>
        <taxon>Cryptococcaceae</taxon>
        <taxon>Cryptococcus</taxon>
        <taxon>Cryptococcus neoformans species complex</taxon>
    </lineage>
</organism>
<name>EF3_CRYNH</name>
<reference evidence="10" key="1">
    <citation type="journal article" date="2014" name="PLoS Genet.">
        <title>Analysis of the genome and transcriptome of Cryptococcus neoformans var. grubii reveals complex RNA expression and microevolution leading to virulence attenuation.</title>
        <authorList>
            <person name="Janbon G."/>
            <person name="Ormerod K.L."/>
            <person name="Paulet D."/>
            <person name="Byrnes E.J. III"/>
            <person name="Yadav V."/>
            <person name="Chatterjee G."/>
            <person name="Mullapudi N."/>
            <person name="Hon C.-C."/>
            <person name="Billmyre R.B."/>
            <person name="Brunel F."/>
            <person name="Bahn Y.-S."/>
            <person name="Chen W."/>
            <person name="Chen Y."/>
            <person name="Chow E.W.L."/>
            <person name="Coppee J.-Y."/>
            <person name="Floyd-Averette A."/>
            <person name="Gaillardin C."/>
            <person name="Gerik K.J."/>
            <person name="Goldberg J."/>
            <person name="Gonzalez-Hilarion S."/>
            <person name="Gujja S."/>
            <person name="Hamlin J.L."/>
            <person name="Hsueh Y.-P."/>
            <person name="Ianiri G."/>
            <person name="Jones S."/>
            <person name="Kodira C.D."/>
            <person name="Kozubowski L."/>
            <person name="Lam W."/>
            <person name="Marra M."/>
            <person name="Mesner L.D."/>
            <person name="Mieczkowski P.A."/>
            <person name="Moyrand F."/>
            <person name="Nielsen K."/>
            <person name="Proux C."/>
            <person name="Rossignol T."/>
            <person name="Schein J.E."/>
            <person name="Sun S."/>
            <person name="Wollschlaeger C."/>
            <person name="Wood I.A."/>
            <person name="Zeng Q."/>
            <person name="Neuveglise C."/>
            <person name="Newlon C.S."/>
            <person name="Perfect J.R."/>
            <person name="Lodge J.K."/>
            <person name="Idnurm A."/>
            <person name="Stajich J.E."/>
            <person name="Kronstad J.W."/>
            <person name="Sanyal K."/>
            <person name="Heitman J."/>
            <person name="Fraser J.A."/>
            <person name="Cuomo C.A."/>
            <person name="Dietrich F.S."/>
        </authorList>
    </citation>
    <scope>NUCLEOTIDE SEQUENCE [LARGE SCALE GENOMIC DNA]</scope>
    <source>
        <strain evidence="10">H99 / ATCC 208821 / CBS 10515 / FGSC 9487</strain>
    </source>
</reference>
<reference evidence="8" key="2">
    <citation type="journal article" date="2008" name="Eukaryot. Cell">
        <title>Elongation factor 3, EF3, associates with the calcium channel Cch1 and targets Cch1 to the plasma membrane in Cryptococcus neoformans.</title>
        <authorList>
            <person name="Liu M."/>
            <person name="Gelli A."/>
        </authorList>
    </citation>
    <scope>FUNCTION</scope>
    <scope>INTERACTION WITH CCH1</scope>
    <scope>DISRUPTION PHENOTYPE</scope>
</reference>
<comment type="function">
    <text evidence="2 3 7">Ribosome-dependent ATPase that functions in cytoplasmic translation elongation (By similarity). Required for the ATP-dependent release of deacylated tRNA from the ribosomal E-site during protein biosynthesis (By similarity). Stimulates the eEF1A-dependent binding of aminoacyl-tRNA to the ribosomal A-site, which has reduced affinity for tRNA as long as the E-site is occupied (By similarity). Assists translation termination by stimulating the release of nascent protein from the ribosome by release factors (By similarity). Appears to localize calcium-channel protein CCH1 to the plasma membrane (PubMed:18503003).</text>
</comment>
<comment type="catalytic activity">
    <reaction evidence="3">
        <text>ATP + H2O = ADP + phosphate + H(+)</text>
        <dbReference type="Rhea" id="RHEA:13065"/>
        <dbReference type="ChEBI" id="CHEBI:15377"/>
        <dbReference type="ChEBI" id="CHEBI:15378"/>
        <dbReference type="ChEBI" id="CHEBI:30616"/>
        <dbReference type="ChEBI" id="CHEBI:43474"/>
        <dbReference type="ChEBI" id="CHEBI:456216"/>
    </reaction>
</comment>
<comment type="pathway">
    <text evidence="1">Protein biosynthesis; polypeptide chain elongation.</text>
</comment>
<comment type="subunit">
    <text evidence="7">Interacts with CCH1; the interaction is direct and required for the localization of CCH1 to the cell membrane.</text>
</comment>
<comment type="subcellular location">
    <subcellularLocation>
        <location evidence="2">Cytoplasm</location>
        <location evidence="2">Cytosol</location>
    </subcellularLocation>
</comment>
<comment type="disruption phenotype">
    <text evidence="7">Knockdown leads to sensitivity to the endoplasmic reticulum-stress inducer tunicamycin and mislocalization of CCH1 to the cell membrane.</text>
</comment>
<comment type="similarity">
    <text evidence="8">Belongs to the ABC transporter superfamily. ABCF family. EF3 subfamily.</text>
</comment>
<dbReference type="EC" id="3.6.4.-" evidence="3"/>
<dbReference type="EMBL" id="CP003824">
    <property type="protein sequence ID" value="AFR95029.2"/>
    <property type="molecule type" value="Genomic_DNA"/>
</dbReference>
<dbReference type="RefSeq" id="XP_012049054.1">
    <property type="nucleotide sequence ID" value="XM_012193664.1"/>
</dbReference>
<dbReference type="SwissPalm" id="J9VQZ9"/>
<dbReference type="GeneID" id="23884860"/>
<dbReference type="KEGG" id="cng:CNAG_01117"/>
<dbReference type="VEuPathDB" id="FungiDB:CNAG_01117"/>
<dbReference type="HOGENOM" id="CLU_002848_0_0_1"/>
<dbReference type="OrthoDB" id="2684at5206"/>
<dbReference type="UniPathway" id="UPA00345"/>
<dbReference type="Proteomes" id="UP000010091">
    <property type="component" value="Chromosome 5"/>
</dbReference>
<dbReference type="GO" id="GO:0005829">
    <property type="term" value="C:cytosol"/>
    <property type="evidence" value="ECO:0007669"/>
    <property type="project" value="UniProtKB-SubCell"/>
</dbReference>
<dbReference type="GO" id="GO:0005524">
    <property type="term" value="F:ATP binding"/>
    <property type="evidence" value="ECO:0007669"/>
    <property type="project" value="UniProtKB-KW"/>
</dbReference>
<dbReference type="GO" id="GO:0016887">
    <property type="term" value="F:ATP hydrolysis activity"/>
    <property type="evidence" value="ECO:0007669"/>
    <property type="project" value="InterPro"/>
</dbReference>
<dbReference type="GO" id="GO:0003723">
    <property type="term" value="F:RNA binding"/>
    <property type="evidence" value="ECO:0007669"/>
    <property type="project" value="UniProtKB-KW"/>
</dbReference>
<dbReference type="GO" id="GO:0003746">
    <property type="term" value="F:translation elongation factor activity"/>
    <property type="evidence" value="ECO:0007669"/>
    <property type="project" value="UniProtKB-KW"/>
</dbReference>
<dbReference type="GO" id="GO:0072659">
    <property type="term" value="P:protein localization to plasma membrane"/>
    <property type="evidence" value="ECO:0000353"/>
    <property type="project" value="UniProtKB"/>
</dbReference>
<dbReference type="CDD" id="cd03221">
    <property type="entry name" value="ABCF_EF-3"/>
    <property type="match status" value="1"/>
</dbReference>
<dbReference type="CDD" id="cd18626">
    <property type="entry name" value="CD_eEF3"/>
    <property type="match status" value="1"/>
</dbReference>
<dbReference type="FunFam" id="1.25.10.10:FF:000076">
    <property type="entry name" value="Elongation factor 3"/>
    <property type="match status" value="1"/>
</dbReference>
<dbReference type="FunFam" id="2.40.50.990:FF:000002">
    <property type="entry name" value="mRNA export factor elf1"/>
    <property type="match status" value="1"/>
</dbReference>
<dbReference type="FunFam" id="3.40.50.300:FF:000193">
    <property type="entry name" value="Probable Elongation factor 3"/>
    <property type="match status" value="1"/>
</dbReference>
<dbReference type="Gene3D" id="2.40.50.990">
    <property type="match status" value="1"/>
</dbReference>
<dbReference type="Gene3D" id="1.25.10.10">
    <property type="entry name" value="Leucine-rich Repeat Variant"/>
    <property type="match status" value="1"/>
</dbReference>
<dbReference type="Gene3D" id="3.40.50.300">
    <property type="entry name" value="P-loop containing nucleotide triphosphate hydrolases"/>
    <property type="match status" value="2"/>
</dbReference>
<dbReference type="InterPro" id="IPR003593">
    <property type="entry name" value="AAA+_ATPase"/>
</dbReference>
<dbReference type="InterPro" id="IPR003439">
    <property type="entry name" value="ABC_transporter-like_ATP-bd"/>
</dbReference>
<dbReference type="InterPro" id="IPR017871">
    <property type="entry name" value="ABC_transporter-like_CS"/>
</dbReference>
<dbReference type="InterPro" id="IPR050611">
    <property type="entry name" value="ABCF_EF3_subfamily"/>
</dbReference>
<dbReference type="InterPro" id="IPR011989">
    <property type="entry name" value="ARM-like"/>
</dbReference>
<dbReference type="InterPro" id="IPR016024">
    <property type="entry name" value="ARM-type_fold"/>
</dbReference>
<dbReference type="InterPro" id="IPR000953">
    <property type="entry name" value="Chromo/chromo_shadow_dom"/>
</dbReference>
<dbReference type="InterPro" id="IPR015688">
    <property type="entry name" value="eEF3_ABC2_chromodomain-like"/>
</dbReference>
<dbReference type="InterPro" id="IPR047038">
    <property type="entry name" value="eEF3_chromodomain-like_sf"/>
</dbReference>
<dbReference type="InterPro" id="IPR021133">
    <property type="entry name" value="HEAT_type_2"/>
</dbReference>
<dbReference type="InterPro" id="IPR027417">
    <property type="entry name" value="P-loop_NTPase"/>
</dbReference>
<dbReference type="InterPro" id="IPR034085">
    <property type="entry name" value="TOG"/>
</dbReference>
<dbReference type="PANTHER" id="PTHR19211">
    <property type="entry name" value="ATP-BINDING TRANSPORT PROTEIN-RELATED"/>
    <property type="match status" value="1"/>
</dbReference>
<dbReference type="PANTHER" id="PTHR19211:SF5">
    <property type="entry name" value="ELONGATION FACTOR 3A-RELATED"/>
    <property type="match status" value="1"/>
</dbReference>
<dbReference type="Pfam" id="PF00005">
    <property type="entry name" value="ABC_tran"/>
    <property type="match status" value="2"/>
</dbReference>
<dbReference type="Pfam" id="PF24984">
    <property type="entry name" value="HEAT_EF3_GNC1"/>
    <property type="match status" value="1"/>
</dbReference>
<dbReference type="Pfam" id="PF24987">
    <property type="entry name" value="HEAT_EF3_N"/>
    <property type="match status" value="1"/>
</dbReference>
<dbReference type="SMART" id="SM00382">
    <property type="entry name" value="AAA"/>
    <property type="match status" value="2"/>
</dbReference>
<dbReference type="SMART" id="SM00298">
    <property type="entry name" value="CHROMO"/>
    <property type="match status" value="1"/>
</dbReference>
<dbReference type="SMART" id="SM01349">
    <property type="entry name" value="TOG"/>
    <property type="match status" value="1"/>
</dbReference>
<dbReference type="SUPFAM" id="SSF48371">
    <property type="entry name" value="ARM repeat"/>
    <property type="match status" value="1"/>
</dbReference>
<dbReference type="SUPFAM" id="SSF52540">
    <property type="entry name" value="P-loop containing nucleoside triphosphate hydrolases"/>
    <property type="match status" value="2"/>
</dbReference>
<dbReference type="PROSITE" id="PS00211">
    <property type="entry name" value="ABC_TRANSPORTER_1"/>
    <property type="match status" value="2"/>
</dbReference>
<dbReference type="PROSITE" id="PS50893">
    <property type="entry name" value="ABC_TRANSPORTER_2"/>
    <property type="match status" value="2"/>
</dbReference>
<dbReference type="PROSITE" id="PS50077">
    <property type="entry name" value="HEAT_REPEAT"/>
    <property type="match status" value="1"/>
</dbReference>
<protein>
    <recommendedName>
        <fullName evidence="8">Elongation factor 3</fullName>
        <shortName evidence="8">EF-3</shortName>
        <ecNumber evidence="3">3.6.4.-</ecNumber>
    </recommendedName>
    <alternativeName>
        <fullName evidence="8">Eukaryotic elongation factor 3</fullName>
        <shortName evidence="8">eEF3</shortName>
    </alternativeName>
</protein>
<evidence type="ECO:0000250" key="1">
    <source>
        <dbReference type="UniProtKB" id="O93796"/>
    </source>
</evidence>
<evidence type="ECO:0000250" key="2">
    <source>
        <dbReference type="UniProtKB" id="P16521"/>
    </source>
</evidence>
<evidence type="ECO:0000250" key="3">
    <source>
        <dbReference type="UniProtKB" id="Q5KIM6"/>
    </source>
</evidence>
<evidence type="ECO:0000255" key="4"/>
<evidence type="ECO:0000255" key="5">
    <source>
        <dbReference type="PROSITE-ProRule" id="PRU00434"/>
    </source>
</evidence>
<evidence type="ECO:0000256" key="6">
    <source>
        <dbReference type="SAM" id="MobiDB-lite"/>
    </source>
</evidence>
<evidence type="ECO:0000269" key="7">
    <source>
    </source>
</evidence>
<evidence type="ECO:0000305" key="8"/>
<evidence type="ECO:0000312" key="9">
    <source>
        <dbReference type="EMBL" id="AFR95029.2"/>
    </source>
</evidence>
<evidence type="ECO:0000312" key="10">
    <source>
        <dbReference type="Proteomes" id="UP000010091"/>
    </source>
</evidence>
<accession>J9VQZ9</accession>
<keyword id="KW-0067">ATP-binding</keyword>
<keyword id="KW-0963">Cytoplasm</keyword>
<keyword id="KW-0251">Elongation factor</keyword>
<keyword id="KW-0378">Hydrolase</keyword>
<keyword id="KW-0547">Nucleotide-binding</keyword>
<keyword id="KW-0648">Protein biosynthesis</keyword>
<keyword id="KW-0677">Repeat</keyword>
<keyword id="KW-0694">RNA-binding</keyword>
<sequence>MAPAATAAASSGKGSFDLATLFVADKAARDEAGLALADAVKKSGVEFFTQIGFNDAIVKALNDKKSQSAREGACEVISTLCENGAAQLLEPHVISSAENTPFPALLEAFADKVAAVKTAAIAAVKAIVQSMNPWASFVLLPALLNLIRTSGKWQIKAGSLEILQQLITSAPFQMGEAMPDLVPVLAEAVWDTKSDVKKAAKATLEKAVSLVENKDIEKFVPALVKSLLNPIEEVPKTISLLSATTFVSEVTAPTISLIAPLLIRGLDERPTATKRKVCVIADNMSKLVDSEYTVRPFLPQLLPRLIKTSETIADPEARSVANRAIVTLRRIGKVPAESDGSDLPPLPVAEGPHLATNFVALVKKHGGVSVEQTNPGLAYAGVLAASLVNHHNFDQKTWESTLPPYLKLALPSYDSLPAVRELLQKKADEAETDDAKFPDEEEGEDLCNIEQFNLAYGAKILLHHANMRLKRGHRYGLCGRNGSGKSTLMNAIINNQVEGFPPPTEVRTFYVQHDIDGSEAEISILDWVLGDKRLLATPDEIKSTLESVGFDEVKQKNSIGSLSGGWKMKLALARAILFKADILLLDEPTNHLDVLNVDWLINYLTSLTRCTSIIVSHDSDFLNRTVTDVLHLNNFKLKRYPGNLEDFVQHVPEAKSYYQLDVAEDYQFKLPNPPLLDGVKTKEKSLLKMRNVSFQYPGSSIQQLYDISLQVSLSSRVAILGPNGSGKSTLVKLLTGETEPNLGGQVWKHPNLVIGYVAQHAFHHIDNHLDSTPLEYMLWRYQTGEDLEEMHKANRVMTEAEIAKMKEGATVIKDGVKRIIDELVARKKLKQSYEYEVSFKGMSSAENIWISRDELVARGFEKKVMELDTREAQRLGLMRPLVRREIEKHFEDFGLDAEFVSHNSMRGLSGGQKVKVVLGAATWRRPHIICLDEPTNYLDRESLAALIAALKNFEGGVLIITHNREFSESICTEVWAMREGYLEASGHNWVEGQGSGERIDKKAADDDEVEYDALGNPIVKAKKEKKLSAADKRKAKKDRMARRKRGEEVFSDEEL</sequence>
<proteinExistence type="evidence at protein level"/>
<gene>
    <name evidence="8" type="primary">TEF3</name>
    <name evidence="9" type="ORF">CNAG_01117</name>
</gene>
<feature type="chain" id="PRO_0000461805" description="Elongation factor 3">
    <location>
        <begin position="1"/>
        <end position="1055"/>
    </location>
</feature>
<feature type="repeat" description="HEAT 1" evidence="4">
    <location>
        <begin position="48"/>
        <end position="86"/>
    </location>
</feature>
<feature type="repeat" description="HEAT 2" evidence="4">
    <location>
        <begin position="96"/>
        <end position="133"/>
    </location>
</feature>
<feature type="repeat" description="HEAT 3" evidence="4">
    <location>
        <begin position="134"/>
        <end position="172"/>
    </location>
</feature>
<feature type="repeat" description="HEAT 4" evidence="4">
    <location>
        <begin position="176"/>
        <end position="213"/>
    </location>
</feature>
<feature type="repeat" description="HEAT 5" evidence="4">
    <location>
        <begin position="218"/>
        <end position="255"/>
    </location>
</feature>
<feature type="repeat" description="HEAT 6" evidence="4">
    <location>
        <begin position="257"/>
        <end position="290"/>
    </location>
</feature>
<feature type="repeat" description="HEAT 7" evidence="4">
    <location>
        <begin position="296"/>
        <end position="337"/>
    </location>
</feature>
<feature type="domain" description="ABC transporter 1" evidence="5">
    <location>
        <begin position="447"/>
        <end position="659"/>
    </location>
</feature>
<feature type="domain" description="ABC transporter 2" evidence="5">
    <location>
        <begin position="687"/>
        <end position="1004"/>
    </location>
</feature>
<feature type="region of interest" description="Disordered" evidence="6">
    <location>
        <begin position="1024"/>
        <end position="1055"/>
    </location>
</feature>
<feature type="compositionally biased region" description="Basic residues" evidence="6">
    <location>
        <begin position="1033"/>
        <end position="1044"/>
    </location>
</feature>
<feature type="binding site" evidence="2">
    <location>
        <position position="45"/>
    </location>
    <ligand>
        <name>ADP</name>
        <dbReference type="ChEBI" id="CHEBI:456216"/>
    </ligand>
</feature>
<feature type="binding site" evidence="2">
    <location>
        <position position="723"/>
    </location>
    <ligand>
        <name>ADP</name>
        <dbReference type="ChEBI" id="CHEBI:456216"/>
    </ligand>
</feature>
<feature type="binding site" evidence="2">
    <location>
        <position position="933"/>
    </location>
    <ligand>
        <name>ADP</name>
        <dbReference type="ChEBI" id="CHEBI:456216"/>
    </ligand>
</feature>
<feature type="binding site" evidence="2">
    <location>
        <position position="936"/>
    </location>
    <ligand>
        <name>ADP</name>
        <dbReference type="ChEBI" id="CHEBI:456216"/>
    </ligand>
</feature>
<feature type="binding site" evidence="2">
    <location>
        <position position="962"/>
    </location>
    <ligand>
        <name>ADP</name>
        <dbReference type="ChEBI" id="CHEBI:456216"/>
    </ligand>
</feature>